<gene>
    <name evidence="1" type="primary">bepA</name>
    <name type="synonym">yfgC</name>
    <name type="ordered locus">b2494</name>
    <name type="ordered locus">JW2479</name>
</gene>
<name>BEPA_ECOLI</name>
<protein>
    <recommendedName>
        <fullName evidence="1">Beta-barrel assembly-enhancing protease</fullName>
        <ecNumber evidence="1">3.4.-.-</ecNumber>
    </recommendedName>
</protein>
<feature type="signal peptide" evidence="1">
    <location>
        <begin position="1"/>
        <end position="27"/>
    </location>
</feature>
<feature type="chain" id="PRO_0000035696" description="Beta-barrel assembly-enhancing protease">
    <location>
        <begin position="28"/>
        <end position="487"/>
    </location>
</feature>
<feature type="repeat" description="TPR 1">
    <location>
        <begin position="309"/>
        <end position="342"/>
    </location>
</feature>
<feature type="repeat" description="TPR 2">
    <location>
        <begin position="344"/>
        <end position="376"/>
    </location>
</feature>
<feature type="repeat" description="TPR 3">
    <location>
        <begin position="377"/>
        <end position="409"/>
    </location>
</feature>
<feature type="repeat" description="TPR 4">
    <location>
        <begin position="427"/>
        <end position="460"/>
    </location>
</feature>
<feature type="active site" evidence="1">
    <location>
        <position position="137"/>
    </location>
</feature>
<feature type="active site" description="Proton donor" evidence="1">
    <location>
        <position position="205"/>
    </location>
</feature>
<feature type="binding site" evidence="1">
    <location>
        <position position="136"/>
    </location>
    <ligand>
        <name>Zn(2+)</name>
        <dbReference type="ChEBI" id="CHEBI:29105"/>
        <note>catalytic</note>
    </ligand>
</feature>
<feature type="binding site" evidence="1">
    <location>
        <position position="140"/>
    </location>
    <ligand>
        <name>Zn(2+)</name>
        <dbReference type="ChEBI" id="CHEBI:29105"/>
        <note>catalytic</note>
    </ligand>
</feature>
<feature type="binding site" evidence="1">
    <location>
        <position position="201"/>
    </location>
    <ligand>
        <name>Zn(2+)</name>
        <dbReference type="ChEBI" id="CHEBI:29105"/>
        <note>catalytic</note>
    </ligand>
</feature>
<feature type="mutagenesis site" description="Lack of protease activity. Increases sensitivity to erythromycin." evidence="3">
    <original>H</original>
    <variation>R</variation>
    <location>
        <position position="136"/>
    </location>
</feature>
<feature type="mutagenesis site" description="Lack of protease activity. Increases sensitivity to erythromycin." evidence="3">
    <original>E</original>
    <variation>Q</variation>
    <location>
        <position position="137"/>
    </location>
</feature>
<feature type="helix" evidence="6">
    <location>
        <begin position="46"/>
        <end position="61"/>
    </location>
</feature>
<feature type="helix" evidence="6">
    <location>
        <begin position="70"/>
        <end position="84"/>
    </location>
</feature>
<feature type="strand" evidence="6">
    <location>
        <begin position="95"/>
        <end position="99"/>
    </location>
</feature>
<feature type="strand" evidence="6">
    <location>
        <begin position="106"/>
        <end position="109"/>
    </location>
</feature>
<feature type="turn" evidence="6">
    <location>
        <begin position="110"/>
        <end position="112"/>
    </location>
</feature>
<feature type="strand" evidence="6">
    <location>
        <begin position="113"/>
        <end position="117"/>
    </location>
</feature>
<feature type="helix" evidence="6">
    <location>
        <begin position="119"/>
        <end position="123"/>
    </location>
</feature>
<feature type="helix" evidence="6">
    <location>
        <begin position="127"/>
        <end position="142"/>
    </location>
</feature>
<feature type="helix" evidence="5">
    <location>
        <begin position="145"/>
        <end position="150"/>
    </location>
</feature>
<feature type="turn" evidence="5">
    <location>
        <begin position="151"/>
        <end position="153"/>
    </location>
</feature>
<feature type="helix" evidence="5">
    <location>
        <begin position="161"/>
        <end position="173"/>
    </location>
</feature>
<feature type="helix" evidence="6">
    <location>
        <begin position="198"/>
        <end position="214"/>
    </location>
</feature>
<feature type="helix" evidence="6">
    <location>
        <begin position="221"/>
        <end position="235"/>
    </location>
</feature>
<feature type="strand" evidence="6">
    <location>
        <begin position="236"/>
        <end position="238"/>
    </location>
</feature>
<feature type="helix" evidence="6">
    <location>
        <begin position="242"/>
        <end position="245"/>
    </location>
</feature>
<feature type="helix" evidence="6">
    <location>
        <begin position="250"/>
        <end position="262"/>
    </location>
</feature>
<feature type="helix" evidence="6">
    <location>
        <begin position="272"/>
        <end position="284"/>
    </location>
</feature>
<feature type="helix" evidence="6">
    <location>
        <begin position="294"/>
        <end position="301"/>
    </location>
</feature>
<feature type="helix" evidence="4">
    <location>
        <begin position="310"/>
        <end position="321"/>
    </location>
</feature>
<feature type="helix" evidence="4">
    <location>
        <begin position="325"/>
        <end position="338"/>
    </location>
</feature>
<feature type="helix" evidence="4">
    <location>
        <begin position="343"/>
        <end position="355"/>
    </location>
</feature>
<feature type="helix" evidence="4">
    <location>
        <begin position="359"/>
        <end position="367"/>
    </location>
</feature>
<feature type="helix" evidence="4">
    <location>
        <begin position="370"/>
        <end position="374"/>
    </location>
</feature>
<feature type="helix" evidence="4">
    <location>
        <begin position="376"/>
        <end position="388"/>
    </location>
</feature>
<feature type="helix" evidence="4">
    <location>
        <begin position="392"/>
        <end position="405"/>
    </location>
</feature>
<feature type="helix" evidence="4">
    <location>
        <begin position="410"/>
        <end position="422"/>
    </location>
</feature>
<feature type="helix" evidence="4">
    <location>
        <begin position="426"/>
        <end position="439"/>
    </location>
</feature>
<feature type="helix" evidence="4">
    <location>
        <begin position="443"/>
        <end position="456"/>
    </location>
</feature>
<feature type="helix" evidence="4">
    <location>
        <begin position="462"/>
        <end position="479"/>
    </location>
</feature>
<comment type="function">
    <text evidence="1 2 3">Functions both as a chaperone and a metalloprotease. Maintains the integrity of the outer membrane by promoting either the assembly or the elimination of outer membrane proteins, depending on their folding state. Promotes disulfide rearrangement of LptD during its biogenesis, and proteolytic degradation of LptD and BamA when their proper assembly is compromised. May facilitate membrane attachment of LoiP under unfavorable conditions.</text>
</comment>
<comment type="cofactor">
    <cofactor evidence="1">
        <name>Zn(2+)</name>
        <dbReference type="ChEBI" id="CHEBI:29105"/>
    </cofactor>
    <text evidence="1">Binds 1 zinc ion per subunit.</text>
</comment>
<comment type="activity regulation">
    <text evidence="3">Protease activity is inhibited by the metal chelating reagents 1,10-phenanthroline and EDTA.</text>
</comment>
<comment type="subunit">
    <text evidence="2 3">Interacts with BamA and LoiP.</text>
</comment>
<comment type="subcellular location">
    <subcellularLocation>
        <location evidence="1 2 3">Periplasm</location>
    </subcellularLocation>
    <text>A significant amount of BepA is membrane-associated. This localization could result from interaction with the BAM complex.</text>
</comment>
<comment type="disruption phenotype">
    <text evidence="3">Disruption sensitizes cells to multiple drugs.</text>
</comment>
<comment type="similarity">
    <text evidence="1">Belongs to the peptidase M48 family. BepA subfamily.</text>
</comment>
<proteinExistence type="evidence at protein level"/>
<accession>P66948</accession>
<accession>P76568</accession>
<accession>Q2MAI2</accession>
<keyword id="KW-0002">3D-structure</keyword>
<keyword id="KW-0378">Hydrolase</keyword>
<keyword id="KW-0479">Metal-binding</keyword>
<keyword id="KW-0482">Metalloprotease</keyword>
<keyword id="KW-0574">Periplasm</keyword>
<keyword id="KW-0645">Protease</keyword>
<keyword id="KW-1185">Reference proteome</keyword>
<keyword id="KW-0677">Repeat</keyword>
<keyword id="KW-0732">Signal</keyword>
<keyword id="KW-0802">TPR repeat</keyword>
<keyword id="KW-0862">Zinc</keyword>
<dbReference type="EC" id="3.4.-.-" evidence="1"/>
<dbReference type="EMBL" id="U00096">
    <property type="protein sequence ID" value="AAC75547.1"/>
    <property type="molecule type" value="Genomic_DNA"/>
</dbReference>
<dbReference type="EMBL" id="AP009048">
    <property type="protein sequence ID" value="BAE76724.1"/>
    <property type="molecule type" value="Genomic_DNA"/>
</dbReference>
<dbReference type="PIR" id="E65025">
    <property type="entry name" value="E65025"/>
</dbReference>
<dbReference type="RefSeq" id="NP_416989.1">
    <property type="nucleotide sequence ID" value="NC_000913.3"/>
</dbReference>
<dbReference type="RefSeq" id="WP_000489667.1">
    <property type="nucleotide sequence ID" value="NZ_STEB01000011.1"/>
</dbReference>
<dbReference type="PDB" id="5XI8">
    <property type="method" value="X-ray"/>
    <property type="resolution" value="1.70 A"/>
    <property type="chains" value="A=310-482"/>
</dbReference>
<dbReference type="PDB" id="6AIT">
    <property type="method" value="X-ray"/>
    <property type="resolution" value="2.60 A"/>
    <property type="chains" value="A/B/C/D/E/F=45-482"/>
</dbReference>
<dbReference type="PDB" id="6SAR">
    <property type="method" value="X-ray"/>
    <property type="resolution" value="2.18 A"/>
    <property type="chains" value="A=1-487"/>
</dbReference>
<dbReference type="PDBsum" id="5XI8"/>
<dbReference type="PDBsum" id="6AIT"/>
<dbReference type="PDBsum" id="6SAR"/>
<dbReference type="SMR" id="P66948"/>
<dbReference type="BioGRID" id="4261434">
    <property type="interactions" value="47"/>
</dbReference>
<dbReference type="DIP" id="DIP-28089N"/>
<dbReference type="FunCoup" id="P66948">
    <property type="interactions" value="197"/>
</dbReference>
<dbReference type="IntAct" id="P66948">
    <property type="interactions" value="3"/>
</dbReference>
<dbReference type="STRING" id="511145.b2494"/>
<dbReference type="MEROPS" id="M48.023"/>
<dbReference type="jPOST" id="P66948"/>
<dbReference type="PaxDb" id="511145-b2494"/>
<dbReference type="EnsemblBacteria" id="AAC75547">
    <property type="protein sequence ID" value="AAC75547"/>
    <property type="gene ID" value="b2494"/>
</dbReference>
<dbReference type="GeneID" id="75204231"/>
<dbReference type="GeneID" id="947029"/>
<dbReference type="KEGG" id="ecj:JW2479"/>
<dbReference type="KEGG" id="eco:b2494"/>
<dbReference type="KEGG" id="ecoc:C3026_13835"/>
<dbReference type="PATRIC" id="fig|511145.12.peg.2590"/>
<dbReference type="EchoBASE" id="EB3951"/>
<dbReference type="eggNOG" id="COG4783">
    <property type="taxonomic scope" value="Bacteria"/>
</dbReference>
<dbReference type="HOGENOM" id="CLU_030556_0_1_6"/>
<dbReference type="InParanoid" id="P66948"/>
<dbReference type="OMA" id="HLSQRHF"/>
<dbReference type="OrthoDB" id="9810445at2"/>
<dbReference type="PhylomeDB" id="P66948"/>
<dbReference type="BioCyc" id="EcoCyc:G7311-MONOMER"/>
<dbReference type="BioCyc" id="MetaCyc:G7311-MONOMER"/>
<dbReference type="PRO" id="PR:P66948"/>
<dbReference type="Proteomes" id="UP000000625">
    <property type="component" value="Chromosome"/>
</dbReference>
<dbReference type="GO" id="GO:0016020">
    <property type="term" value="C:membrane"/>
    <property type="evidence" value="ECO:0000314"/>
    <property type="project" value="EcoCyc"/>
</dbReference>
<dbReference type="GO" id="GO:0030288">
    <property type="term" value="C:outer membrane-bounded periplasmic space"/>
    <property type="evidence" value="ECO:0000304"/>
    <property type="project" value="EcoCyc"/>
</dbReference>
<dbReference type="GO" id="GO:0046872">
    <property type="term" value="F:metal ion binding"/>
    <property type="evidence" value="ECO:0000255"/>
    <property type="project" value="EcoCyc"/>
</dbReference>
<dbReference type="GO" id="GO:0004222">
    <property type="term" value="F:metalloendopeptidase activity"/>
    <property type="evidence" value="ECO:0000314"/>
    <property type="project" value="EcoCyc"/>
</dbReference>
<dbReference type="GO" id="GO:0003756">
    <property type="term" value="F:protein disulfide isomerase activity"/>
    <property type="evidence" value="ECO:0000315"/>
    <property type="project" value="EcoCyc"/>
</dbReference>
<dbReference type="GO" id="GO:0008270">
    <property type="term" value="F:zinc ion binding"/>
    <property type="evidence" value="ECO:0000314"/>
    <property type="project" value="EcoCyc"/>
</dbReference>
<dbReference type="GO" id="GO:0061077">
    <property type="term" value="P:chaperone-mediated protein folding"/>
    <property type="evidence" value="ECO:0000315"/>
    <property type="project" value="EcoCyc"/>
</dbReference>
<dbReference type="GO" id="GO:0043165">
    <property type="term" value="P:Gram-negative-bacterium-type cell outer membrane assembly"/>
    <property type="evidence" value="ECO:0000315"/>
    <property type="project" value="EcoCyc"/>
</dbReference>
<dbReference type="GO" id="GO:0051603">
    <property type="term" value="P:proteolysis involved in protein catabolic process"/>
    <property type="evidence" value="ECO:0000314"/>
    <property type="project" value="EcoCyc"/>
</dbReference>
<dbReference type="CDD" id="cd07333">
    <property type="entry name" value="M48C_bepA_like"/>
    <property type="match status" value="1"/>
</dbReference>
<dbReference type="FunFam" id="3.30.2010.10:FF:000006">
    <property type="entry name" value="Beta-barrel assembly-enhancing protease"/>
    <property type="match status" value="1"/>
</dbReference>
<dbReference type="Gene3D" id="3.30.2010.10">
    <property type="entry name" value="Metalloproteases ('zincins'), catalytic domain"/>
    <property type="match status" value="1"/>
</dbReference>
<dbReference type="Gene3D" id="1.25.40.10">
    <property type="entry name" value="Tetratricopeptide repeat domain"/>
    <property type="match status" value="1"/>
</dbReference>
<dbReference type="HAMAP" id="MF_00997">
    <property type="entry name" value="Protease_BepA"/>
    <property type="match status" value="1"/>
</dbReference>
<dbReference type="InterPro" id="IPR051156">
    <property type="entry name" value="Mito/Outer_Membr_Metalloprot"/>
</dbReference>
<dbReference type="InterPro" id="IPR001915">
    <property type="entry name" value="Peptidase_M48"/>
</dbReference>
<dbReference type="InterPro" id="IPR030873">
    <property type="entry name" value="Protease_BepA"/>
</dbReference>
<dbReference type="InterPro" id="IPR011990">
    <property type="entry name" value="TPR-like_helical_dom_sf"/>
</dbReference>
<dbReference type="PANTHER" id="PTHR22726">
    <property type="entry name" value="METALLOENDOPEPTIDASE OMA1"/>
    <property type="match status" value="1"/>
</dbReference>
<dbReference type="PANTHER" id="PTHR22726:SF1">
    <property type="entry name" value="METALLOENDOPEPTIDASE OMA1, MITOCHONDRIAL"/>
    <property type="match status" value="1"/>
</dbReference>
<dbReference type="Pfam" id="PF01435">
    <property type="entry name" value="Peptidase_M48"/>
    <property type="match status" value="1"/>
</dbReference>
<dbReference type="Pfam" id="PF14559">
    <property type="entry name" value="TPR_19"/>
    <property type="match status" value="1"/>
</dbReference>
<dbReference type="SUPFAM" id="SSF48452">
    <property type="entry name" value="TPR-like"/>
    <property type="match status" value="1"/>
</dbReference>
<reference key="1">
    <citation type="journal article" date="1997" name="Science">
        <title>The complete genome sequence of Escherichia coli K-12.</title>
        <authorList>
            <person name="Blattner F.R."/>
            <person name="Plunkett G. III"/>
            <person name="Bloch C.A."/>
            <person name="Perna N.T."/>
            <person name="Burland V."/>
            <person name="Riley M."/>
            <person name="Collado-Vides J."/>
            <person name="Glasner J.D."/>
            <person name="Rode C.K."/>
            <person name="Mayhew G.F."/>
            <person name="Gregor J."/>
            <person name="Davis N.W."/>
            <person name="Kirkpatrick H.A."/>
            <person name="Goeden M.A."/>
            <person name="Rose D.J."/>
            <person name="Mau B."/>
            <person name="Shao Y."/>
        </authorList>
    </citation>
    <scope>NUCLEOTIDE SEQUENCE [LARGE SCALE GENOMIC DNA]</scope>
    <source>
        <strain>K12 / MG1655 / ATCC 47076</strain>
    </source>
</reference>
<reference key="2">
    <citation type="journal article" date="2006" name="Mol. Syst. Biol.">
        <title>Highly accurate genome sequences of Escherichia coli K-12 strains MG1655 and W3110.</title>
        <authorList>
            <person name="Hayashi K."/>
            <person name="Morooka N."/>
            <person name="Yamamoto Y."/>
            <person name="Fujita K."/>
            <person name="Isono K."/>
            <person name="Choi S."/>
            <person name="Ohtsubo E."/>
            <person name="Baba T."/>
            <person name="Wanner B.L."/>
            <person name="Mori H."/>
            <person name="Horiuchi T."/>
        </authorList>
    </citation>
    <scope>NUCLEOTIDE SEQUENCE [LARGE SCALE GENOMIC DNA]</scope>
    <source>
        <strain>K12 / W3110 / ATCC 27325 / DSM 5911</strain>
    </source>
</reference>
<reference key="3">
    <citation type="journal article" date="2012" name="Mol. Biosyst.">
        <title>E. coli LoiP (YggG), a metalloprotease hydrolyzing Phe-Phe bonds.</title>
        <authorList>
            <person name="Lutticke C."/>
            <person name="Hauske P."/>
            <person name="Lewandrowski U."/>
            <person name="Sickmann A."/>
            <person name="Kaiser M."/>
            <person name="Ehrmann M."/>
        </authorList>
    </citation>
    <scope>FUNCTION</scope>
    <scope>INTERACTION WITH LOIP</scope>
    <scope>SUBCELLULAR LOCATION</scope>
</reference>
<reference key="4">
    <citation type="journal article" date="2013" name="Proc. Natl. Acad. Sci. U.S.A.">
        <title>Protease homolog BepA (YfgC) promotes assembly and degradation of beta-barrel membrane proteins in Escherichia coli.</title>
        <authorList>
            <person name="Narita S."/>
            <person name="Masui C."/>
            <person name="Suzuki T."/>
            <person name="Dohmae N."/>
            <person name="Akiyama Y."/>
        </authorList>
    </citation>
    <scope>FUNCTION AS A CHAPERONE AND A PROTEASE</scope>
    <scope>ACTIVITY REGULATION</scope>
    <scope>INTERACTION WITH BAMA</scope>
    <scope>SUBCELLULAR LOCATION</scope>
    <scope>DISRUPTION PHENOTYPE</scope>
    <scope>GENE NAME</scope>
    <scope>MUTAGENESIS OF HIS-136 AND GLU-137</scope>
    <source>
        <strain>K12</strain>
    </source>
</reference>
<evidence type="ECO:0000255" key="1">
    <source>
        <dbReference type="HAMAP-Rule" id="MF_00997"/>
    </source>
</evidence>
<evidence type="ECO:0000269" key="2">
    <source>
    </source>
</evidence>
<evidence type="ECO:0000269" key="3">
    <source>
    </source>
</evidence>
<evidence type="ECO:0007829" key="4">
    <source>
        <dbReference type="PDB" id="5XI8"/>
    </source>
</evidence>
<evidence type="ECO:0007829" key="5">
    <source>
        <dbReference type="PDB" id="6AIT"/>
    </source>
</evidence>
<evidence type="ECO:0007829" key="6">
    <source>
        <dbReference type="PDB" id="6SAR"/>
    </source>
</evidence>
<organism>
    <name type="scientific">Escherichia coli (strain K12)</name>
    <dbReference type="NCBI Taxonomy" id="83333"/>
    <lineage>
        <taxon>Bacteria</taxon>
        <taxon>Pseudomonadati</taxon>
        <taxon>Pseudomonadota</taxon>
        <taxon>Gammaproteobacteria</taxon>
        <taxon>Enterobacterales</taxon>
        <taxon>Enterobacteriaceae</taxon>
        <taxon>Escherichia</taxon>
    </lineage>
</organism>
<sequence>MFRQLKKNLVATLIAAMTIGQVAPAFADSADTLPDMGTSAGSTLSIGQEMQMGDYYVRQLRGSAPLINDPLLTQYINSLGMRLVSHANSVKTPFHFFLINNDEINAFAFFGGNVVLHSALFRYSDNESQLASVMAHEISHVTQRHLARAMEDQQRSAPLTWVGALGSILLAMASPQAGMAALTGTLAGTRQGMISFTQQNEQEADRIGIQVLQRSGFDPQAMPTFLEKLLDQARYSSRPPEILLTHPLPESRLADARNRANQMRPMVVQSSEDFYLAKARTLGMYNSGRNQLTSDLLDEWAKGNVRQQRAAQYGRALQAMEANKYDEARKTLQPLLAAEPGNAWYLDLATDIDLGQNKANEAINRLKNARDLRTNPVLQLNLANAYLQGGQPQEAANILNRYTFNNKDDSNGWDLLAQAEAALNNRDQELAARAEGYALAGRLDQAISLLSSASSQVKLGSLQQARYDARIDQLRQLQERFKPYTKM</sequence>